<reference key="1">
    <citation type="submission" date="2007-07" db="EMBL/GenBank/DDBJ databases">
        <title>Complete genome sequence of Campylobacter jejuni subsp doylei 269.97 isolated from human blood.</title>
        <authorList>
            <person name="Fouts D.E."/>
            <person name="Mongodin E.F."/>
            <person name="Puiu D."/>
            <person name="Sebastian Y."/>
            <person name="Miller W.G."/>
            <person name="Mandrell R.E."/>
            <person name="Lastovica A.J."/>
            <person name="Nelson K.E."/>
        </authorList>
    </citation>
    <scope>NUCLEOTIDE SEQUENCE [LARGE SCALE GENOMIC DNA]</scope>
    <source>
        <strain>ATCC BAA-1458 / RM4099 / 269.97</strain>
    </source>
</reference>
<organism>
    <name type="scientific">Campylobacter jejuni subsp. doylei (strain ATCC BAA-1458 / RM4099 / 269.97)</name>
    <dbReference type="NCBI Taxonomy" id="360109"/>
    <lineage>
        <taxon>Bacteria</taxon>
        <taxon>Pseudomonadati</taxon>
        <taxon>Campylobacterota</taxon>
        <taxon>Epsilonproteobacteria</taxon>
        <taxon>Campylobacterales</taxon>
        <taxon>Campylobacteraceae</taxon>
        <taxon>Campylobacter</taxon>
    </lineage>
</organism>
<name>DCD_CAMJD</name>
<dbReference type="EC" id="3.5.4.13" evidence="1"/>
<dbReference type="EMBL" id="CP000768">
    <property type="protein sequence ID" value="ABS43852.1"/>
    <property type="molecule type" value="Genomic_DNA"/>
</dbReference>
<dbReference type="SMR" id="A7H291"/>
<dbReference type="KEGG" id="cjd:JJD26997_0430"/>
<dbReference type="HOGENOM" id="CLU_087476_4_0_7"/>
<dbReference type="UniPathway" id="UPA00610">
    <property type="reaction ID" value="UER00665"/>
</dbReference>
<dbReference type="Proteomes" id="UP000002302">
    <property type="component" value="Chromosome"/>
</dbReference>
<dbReference type="GO" id="GO:0008829">
    <property type="term" value="F:dCTP deaminase activity"/>
    <property type="evidence" value="ECO:0007669"/>
    <property type="project" value="UniProtKB-UniRule"/>
</dbReference>
<dbReference type="GO" id="GO:0000166">
    <property type="term" value="F:nucleotide binding"/>
    <property type="evidence" value="ECO:0007669"/>
    <property type="project" value="UniProtKB-KW"/>
</dbReference>
<dbReference type="GO" id="GO:0006226">
    <property type="term" value="P:dUMP biosynthetic process"/>
    <property type="evidence" value="ECO:0007669"/>
    <property type="project" value="UniProtKB-UniPathway"/>
</dbReference>
<dbReference type="GO" id="GO:0006229">
    <property type="term" value="P:dUTP biosynthetic process"/>
    <property type="evidence" value="ECO:0007669"/>
    <property type="project" value="UniProtKB-UniRule"/>
</dbReference>
<dbReference type="GO" id="GO:0015949">
    <property type="term" value="P:nucleobase-containing small molecule interconversion"/>
    <property type="evidence" value="ECO:0007669"/>
    <property type="project" value="TreeGrafter"/>
</dbReference>
<dbReference type="CDD" id="cd07557">
    <property type="entry name" value="trimeric_dUTPase"/>
    <property type="match status" value="1"/>
</dbReference>
<dbReference type="FunFam" id="2.70.40.10:FF:000006">
    <property type="entry name" value="dCTP deaminase"/>
    <property type="match status" value="1"/>
</dbReference>
<dbReference type="Gene3D" id="2.70.40.10">
    <property type="match status" value="1"/>
</dbReference>
<dbReference type="HAMAP" id="MF_00146">
    <property type="entry name" value="dCTP_deaminase"/>
    <property type="match status" value="1"/>
</dbReference>
<dbReference type="InterPro" id="IPR011962">
    <property type="entry name" value="dCTP_deaminase"/>
</dbReference>
<dbReference type="InterPro" id="IPR036157">
    <property type="entry name" value="dUTPase-like_sf"/>
</dbReference>
<dbReference type="InterPro" id="IPR033704">
    <property type="entry name" value="dUTPase_trimeric"/>
</dbReference>
<dbReference type="NCBIfam" id="TIGR02274">
    <property type="entry name" value="dCTP_deam"/>
    <property type="match status" value="1"/>
</dbReference>
<dbReference type="PANTHER" id="PTHR42680">
    <property type="entry name" value="DCTP DEAMINASE"/>
    <property type="match status" value="1"/>
</dbReference>
<dbReference type="PANTHER" id="PTHR42680:SF3">
    <property type="entry name" value="DCTP DEAMINASE"/>
    <property type="match status" value="1"/>
</dbReference>
<dbReference type="Pfam" id="PF22769">
    <property type="entry name" value="DCD"/>
    <property type="match status" value="1"/>
</dbReference>
<dbReference type="SUPFAM" id="SSF51283">
    <property type="entry name" value="dUTPase-like"/>
    <property type="match status" value="1"/>
</dbReference>
<proteinExistence type="inferred from homology"/>
<keyword id="KW-0378">Hydrolase</keyword>
<keyword id="KW-0546">Nucleotide metabolism</keyword>
<keyword id="KW-0547">Nucleotide-binding</keyword>
<feature type="chain" id="PRO_1000009702" description="dCTP deaminase">
    <location>
        <begin position="1"/>
        <end position="186"/>
    </location>
</feature>
<feature type="active site" description="Proton donor/acceptor" evidence="1">
    <location>
        <position position="133"/>
    </location>
</feature>
<feature type="binding site" evidence="1">
    <location>
        <begin position="107"/>
        <end position="112"/>
    </location>
    <ligand>
        <name>dCTP</name>
        <dbReference type="ChEBI" id="CHEBI:61481"/>
    </ligand>
</feature>
<feature type="binding site" evidence="1">
    <location>
        <position position="152"/>
    </location>
    <ligand>
        <name>dCTP</name>
        <dbReference type="ChEBI" id="CHEBI:61481"/>
    </ligand>
</feature>
<feature type="binding site" evidence="1">
    <location>
        <position position="166"/>
    </location>
    <ligand>
        <name>dCTP</name>
        <dbReference type="ChEBI" id="CHEBI:61481"/>
    </ligand>
</feature>
<feature type="binding site" evidence="1">
    <location>
        <position position="176"/>
    </location>
    <ligand>
        <name>dCTP</name>
        <dbReference type="ChEBI" id="CHEBI:61481"/>
    </ligand>
</feature>
<protein>
    <recommendedName>
        <fullName evidence="1">dCTP deaminase</fullName>
        <ecNumber evidence="1">3.5.4.13</ecNumber>
    </recommendedName>
    <alternativeName>
        <fullName evidence="1">Deoxycytidine triphosphate deaminase</fullName>
    </alternativeName>
</protein>
<gene>
    <name evidence="1" type="primary">dcd</name>
    <name type="ordered locus">JJD26997_0430</name>
</gene>
<evidence type="ECO:0000255" key="1">
    <source>
        <dbReference type="HAMAP-Rule" id="MF_00146"/>
    </source>
</evidence>
<sequence>MGLKADNWIRKMALEHKMIEPFCEANIGKGVVSYGLSSYGYDICVGREFKIFTNVNSTVVDPKNFVEENVVDFEGDVCIVPANSFALARTIEYFKMPDDVLAICLGKSTYARCGIIVNVTPFEPGFEGHITIEISNTTPLPAKIYANEGIAQVLFLQGDEKCDTTYKDKKGKYQAQTGITLPRILK</sequence>
<accession>A7H291</accession>
<comment type="function">
    <text evidence="1">Catalyzes the deamination of dCTP to dUTP.</text>
</comment>
<comment type="catalytic activity">
    <reaction evidence="1">
        <text>dCTP + H2O + H(+) = dUTP + NH4(+)</text>
        <dbReference type="Rhea" id="RHEA:22680"/>
        <dbReference type="ChEBI" id="CHEBI:15377"/>
        <dbReference type="ChEBI" id="CHEBI:15378"/>
        <dbReference type="ChEBI" id="CHEBI:28938"/>
        <dbReference type="ChEBI" id="CHEBI:61481"/>
        <dbReference type="ChEBI" id="CHEBI:61555"/>
        <dbReference type="EC" id="3.5.4.13"/>
    </reaction>
</comment>
<comment type="pathway">
    <text evidence="1">Pyrimidine metabolism; dUMP biosynthesis; dUMP from dCTP (dUTP route): step 1/2.</text>
</comment>
<comment type="subunit">
    <text evidence="1">Homotrimer.</text>
</comment>
<comment type="similarity">
    <text evidence="1">Belongs to the dCTP deaminase family.</text>
</comment>